<comment type="function">
    <text evidence="1">SOSEKI proteins locally interpret global polarity cues and can influence cell division orientation to coordinate cell polarization relative to body axes.</text>
</comment>
<comment type="subunit">
    <text evidence="1 3">Homodimer (By similarity). Forms long polymer filaments with other SOKs proteins polymers crucial for polar localization and biological activity (PubMed:32004461).</text>
</comment>
<comment type="subcellular location">
    <subcellularLocation>
        <location evidence="1">Cell membrane</location>
        <topology evidence="1">Peripheral membrane protein</topology>
        <orientation evidence="1">Cytoplasmic side</orientation>
    </subcellularLocation>
</comment>
<comment type="domain">
    <text evidence="1">The DIX-like oligomerization domain is required for polymerization, edge localization and biological activity.</text>
</comment>
<comment type="miscellaneous">
    <text evidence="5">'Soseki' means cornerstone in Japanese.</text>
</comment>
<comment type="similarity">
    <text evidence="5">Belongs to the SOSEKI family.</text>
</comment>
<keyword id="KW-0131">Cell cycle</keyword>
<keyword id="KW-0132">Cell division</keyword>
<keyword id="KW-1003">Cell membrane</keyword>
<keyword id="KW-0217">Developmental protein</keyword>
<keyword id="KW-0472">Membrane</keyword>
<keyword id="KW-1185">Reference proteome</keyword>
<accession>A0A2K1L2D9</accession>
<proteinExistence type="evidence at protein level"/>
<dbReference type="EMBL" id="ABEU02000002">
    <property type="protein sequence ID" value="PNR60194.1"/>
    <property type="molecule type" value="Genomic_DNA"/>
</dbReference>
<dbReference type="SMR" id="A0A2K1L2D9"/>
<dbReference type="FunCoup" id="A0A2K1L2D9">
    <property type="interactions" value="1674"/>
</dbReference>
<dbReference type="PaxDb" id="3218-PP1S165_20V6.1"/>
<dbReference type="EnsemblPlants" id="Pp3c2_20380V3.1">
    <property type="protein sequence ID" value="Pp3c2_20380V3.1"/>
    <property type="gene ID" value="Pp3c2_20380"/>
</dbReference>
<dbReference type="EnsemblPlants" id="Pp3c2_20380V3.2">
    <property type="protein sequence ID" value="Pp3c2_20380V3.2"/>
    <property type="gene ID" value="Pp3c2_20380"/>
</dbReference>
<dbReference type="Gramene" id="Pp3c2_20380V3.1">
    <property type="protein sequence ID" value="Pp3c2_20380V3.1"/>
    <property type="gene ID" value="Pp3c2_20380"/>
</dbReference>
<dbReference type="Gramene" id="Pp3c2_20380V3.2">
    <property type="protein sequence ID" value="Pp3c2_20380V3.2"/>
    <property type="gene ID" value="Pp3c2_20380"/>
</dbReference>
<dbReference type="InParanoid" id="A0A2K1L2D9"/>
<dbReference type="Proteomes" id="UP000006727">
    <property type="component" value="Chromosome 2"/>
</dbReference>
<dbReference type="GO" id="GO:0005886">
    <property type="term" value="C:plasma membrane"/>
    <property type="evidence" value="ECO:0007669"/>
    <property type="project" value="UniProtKB-SubCell"/>
</dbReference>
<dbReference type="GO" id="GO:0042803">
    <property type="term" value="F:protein homodimerization activity"/>
    <property type="evidence" value="ECO:0000250"/>
    <property type="project" value="UniProtKB"/>
</dbReference>
<dbReference type="GO" id="GO:0051301">
    <property type="term" value="P:cell division"/>
    <property type="evidence" value="ECO:0007669"/>
    <property type="project" value="UniProtKB-KW"/>
</dbReference>
<dbReference type="GO" id="GO:1905392">
    <property type="term" value="P:plant organ morphogenesis"/>
    <property type="evidence" value="ECO:0000250"/>
    <property type="project" value="UniProtKB"/>
</dbReference>
<dbReference type="GO" id="GO:0051258">
    <property type="term" value="P:protein polymerization"/>
    <property type="evidence" value="ECO:0000314"/>
    <property type="project" value="UniProtKB"/>
</dbReference>
<dbReference type="GO" id="GO:0051302">
    <property type="term" value="P:regulation of cell division"/>
    <property type="evidence" value="ECO:0000250"/>
    <property type="project" value="UniProtKB"/>
</dbReference>
<dbReference type="GO" id="GO:0090708">
    <property type="term" value="P:specification of plant organ axis polarity"/>
    <property type="evidence" value="ECO:0000250"/>
    <property type="project" value="UniProtKB"/>
</dbReference>
<dbReference type="InterPro" id="IPR010369">
    <property type="entry name" value="SOK"/>
</dbReference>
<dbReference type="InterPro" id="IPR048351">
    <property type="entry name" value="SOK_DIX"/>
</dbReference>
<dbReference type="PANTHER" id="PTHR31083:SF6">
    <property type="entry name" value="PROTEIN SOSEKI 3"/>
    <property type="match status" value="1"/>
</dbReference>
<dbReference type="PANTHER" id="PTHR31083">
    <property type="entry name" value="UPSTREAM OF FLC PROTEIN (DUF966)"/>
    <property type="match status" value="1"/>
</dbReference>
<dbReference type="Pfam" id="PF06136">
    <property type="entry name" value="SOK"/>
    <property type="match status" value="1"/>
</dbReference>
<sequence length="636" mass="69848">MDSSSESYHKIEVIYLLSKGAEQDDHPHMIQVQYPSHQHAPTLRDVKFRLTALRGRGMPDSYSWSYKRSYKGTFIWCDVFDGDDILPLSESGEYVLKALEVMDSSEDACDRGVEHLGQEVARVLPTNRNGTSANFNEVHSIDDVRRVAPNKCVEVKRQFMGGSVHNNMTGKANRNEQGDAYGTTSRVPDPENCIENKRCLESMTGSDSSRSNISTDESYGLSFERDLKMDMKEMPACPATRSTDHGGMSSLAPRSSRLSRREYVKCKTWAVKEDENAALNHGRLSRRSSDTLRDSNSVGNTVDIPSSPVTRPCFPGDPLIFMLKKATKFHRSQLCRKAEVEGSPCATVGKPSSSRHTSKIRHGSGPLKAYHGPHSSKSATQNSRPVTYETSAKESERDIRSLCQFLGASNVGSVSQTINKEGTKKTGSARHIQAGSNDDFDFARHKEVAVDISEKLLLPEQVTGRYEKPSRMSKQLINKLDSKSLNMVTRPAVRLSSKLGSGQASESFSPASPHAPQRPIVSRPQEKAVNQLSLVAGFEDPQITSSDTSNAGLSCTSKASGLKAVKLPRNASNNCYFSLTIPDLEKRAADTKVYPWRENSAFNSIELYSGTLQKVDLAINTSFNGATLGELASGGC</sequence>
<evidence type="ECO:0000250" key="1">
    <source>
        <dbReference type="UniProtKB" id="Q9SYJ8"/>
    </source>
</evidence>
<evidence type="ECO:0000256" key="2">
    <source>
        <dbReference type="SAM" id="MobiDB-lite"/>
    </source>
</evidence>
<evidence type="ECO:0000269" key="3">
    <source>
    </source>
</evidence>
<evidence type="ECO:0000303" key="4">
    <source>
    </source>
</evidence>
<evidence type="ECO:0000305" key="5"/>
<evidence type="ECO:0000312" key="6">
    <source>
        <dbReference type="EMBL" id="PNR60194.1"/>
    </source>
</evidence>
<name>SOK2_PHYPA</name>
<reference key="1">
    <citation type="journal article" date="2008" name="Science">
        <title>The Physcomitrella genome reveals evolutionary insights into the conquest of land by plants.</title>
        <authorList>
            <person name="Rensing S.A."/>
            <person name="Lang D."/>
            <person name="Zimmer A.D."/>
            <person name="Terry A."/>
            <person name="Salamov A."/>
            <person name="Shapiro H."/>
            <person name="Nishiyama T."/>
            <person name="Perroud P.-F."/>
            <person name="Lindquist E.A."/>
            <person name="Kamisugi Y."/>
            <person name="Tanahashi T."/>
            <person name="Sakakibara K."/>
            <person name="Fujita T."/>
            <person name="Oishi K."/>
            <person name="Shin-I T."/>
            <person name="Kuroki Y."/>
            <person name="Toyoda A."/>
            <person name="Suzuki Y."/>
            <person name="Hashimoto S.-I."/>
            <person name="Yamaguchi K."/>
            <person name="Sugano S."/>
            <person name="Kohara Y."/>
            <person name="Fujiyama A."/>
            <person name="Anterola A."/>
            <person name="Aoki S."/>
            <person name="Ashton N."/>
            <person name="Barbazuk W.B."/>
            <person name="Barker E."/>
            <person name="Bennetzen J.L."/>
            <person name="Blankenship R."/>
            <person name="Cho S.H."/>
            <person name="Dutcher S.K."/>
            <person name="Estelle M."/>
            <person name="Fawcett J.A."/>
            <person name="Gundlach H."/>
            <person name="Hanada K."/>
            <person name="Heyl A."/>
            <person name="Hicks K.A."/>
            <person name="Hughes J."/>
            <person name="Lohr M."/>
            <person name="Mayer K."/>
            <person name="Melkozernov A."/>
            <person name="Murata T."/>
            <person name="Nelson D.R."/>
            <person name="Pils B."/>
            <person name="Prigge M."/>
            <person name="Reiss B."/>
            <person name="Renner T."/>
            <person name="Rombauts S."/>
            <person name="Rushton P.J."/>
            <person name="Sanderfoot A."/>
            <person name="Schween G."/>
            <person name="Shiu S.-H."/>
            <person name="Stueber K."/>
            <person name="Theodoulou F.L."/>
            <person name="Tu H."/>
            <person name="Van de Peer Y."/>
            <person name="Verrier P.J."/>
            <person name="Waters E."/>
            <person name="Wood A."/>
            <person name="Yang L."/>
            <person name="Cove D."/>
            <person name="Cuming A.C."/>
            <person name="Hasebe M."/>
            <person name="Lucas S."/>
            <person name="Mishler B.D."/>
            <person name="Reski R."/>
            <person name="Grigoriev I.V."/>
            <person name="Quatrano R.S."/>
            <person name="Boore J.L."/>
        </authorList>
    </citation>
    <scope>NUCLEOTIDE SEQUENCE [LARGE SCALE GENOMIC DNA]</scope>
    <source>
        <strain>cv. Gransden 2004</strain>
    </source>
</reference>
<reference key="2">
    <citation type="journal article" date="2018" name="Plant J.">
        <title>The Physcomitrella patens chromosome-scale assembly reveals moss genome structure and evolution.</title>
        <authorList>
            <person name="Lang D."/>
            <person name="Ullrich K.K."/>
            <person name="Murat F."/>
            <person name="Fuchs J."/>
            <person name="Jenkins J."/>
            <person name="Haas F.B."/>
            <person name="Piednoel M."/>
            <person name="Gundlach H."/>
            <person name="Van Bel M."/>
            <person name="Meyberg R."/>
            <person name="Vives C."/>
            <person name="Morata J."/>
            <person name="Symeonidi A."/>
            <person name="Hiss M."/>
            <person name="Muchero W."/>
            <person name="Kamisugi Y."/>
            <person name="Saleh O."/>
            <person name="Blanc G."/>
            <person name="Decker E.L."/>
            <person name="van Gessel N."/>
            <person name="Grimwood J."/>
            <person name="Hayes R.D."/>
            <person name="Graham S.W."/>
            <person name="Gunter L.E."/>
            <person name="McDaniel S.F."/>
            <person name="Hoernstein S.N.W."/>
            <person name="Larsson A."/>
            <person name="Li F.W."/>
            <person name="Perroud P.F."/>
            <person name="Phillips J."/>
            <person name="Ranjan P."/>
            <person name="Rokshar D.S."/>
            <person name="Rothfels C.J."/>
            <person name="Schneider L."/>
            <person name="Shu S."/>
            <person name="Stevenson D.W."/>
            <person name="Thummler F."/>
            <person name="Tillich M."/>
            <person name="Villarreal Aguilar J.C."/>
            <person name="Widiez T."/>
            <person name="Wong G.K."/>
            <person name="Wymore A."/>
            <person name="Zhang Y."/>
            <person name="Zimmer A.D."/>
            <person name="Quatrano R.S."/>
            <person name="Mayer K.F.X."/>
            <person name="Goodstein D."/>
            <person name="Casacuberta J.M."/>
            <person name="Vandepoele K."/>
            <person name="Reski R."/>
            <person name="Cuming A.C."/>
            <person name="Tuskan G.A."/>
            <person name="Maumus F."/>
            <person name="Salse J."/>
            <person name="Schmutz J."/>
            <person name="Rensing S.A."/>
        </authorList>
    </citation>
    <scope>GENOME REANNOTATION</scope>
    <source>
        <strain>cv. Gransden 2004</strain>
    </source>
</reference>
<reference key="3">
    <citation type="journal article" date="2020" name="Cell">
        <title>DIX domain polymerization drives assembly of plant cell polarity complexes.</title>
        <authorList>
            <person name="van Dop M."/>
            <person name="Fiedler M."/>
            <person name="Mutte S."/>
            <person name="de Keijzer J."/>
            <person name="Olijslager L."/>
            <person name="Albrecht C."/>
            <person name="Liao C.Y."/>
            <person name="Janson M.E."/>
            <person name="Bienz M."/>
            <person name="Weijers D."/>
        </authorList>
    </citation>
    <scope>SUBUNIT</scope>
    <scope>GENE FAMILY</scope>
</reference>
<gene>
    <name evidence="4" type="primary">SOK2</name>
    <name evidence="6" type="ORF">PHYPA_002987</name>
</gene>
<organism>
    <name type="scientific">Physcomitrium patens</name>
    <name type="common">Spreading-leaved earth moss</name>
    <name type="synonym">Physcomitrella patens</name>
    <dbReference type="NCBI Taxonomy" id="3218"/>
    <lineage>
        <taxon>Eukaryota</taxon>
        <taxon>Viridiplantae</taxon>
        <taxon>Streptophyta</taxon>
        <taxon>Embryophyta</taxon>
        <taxon>Bryophyta</taxon>
        <taxon>Bryophytina</taxon>
        <taxon>Bryopsida</taxon>
        <taxon>Funariidae</taxon>
        <taxon>Funariales</taxon>
        <taxon>Funariaceae</taxon>
        <taxon>Physcomitrium</taxon>
    </lineage>
</organism>
<feature type="chain" id="PRO_0000452146" description="Protein SOSEKI 2">
    <location>
        <begin position="1"/>
        <end position="636"/>
    </location>
</feature>
<feature type="region of interest" description="DIX-like oligomerization domain" evidence="1">
    <location>
        <begin position="9"/>
        <end position="103"/>
    </location>
</feature>
<feature type="region of interest" description="Disordered" evidence="2">
    <location>
        <begin position="164"/>
        <end position="188"/>
    </location>
</feature>
<feature type="region of interest" description="Disordered" evidence="2">
    <location>
        <begin position="281"/>
        <end position="304"/>
    </location>
</feature>
<feature type="region of interest" description="Disordered" evidence="2">
    <location>
        <begin position="340"/>
        <end position="393"/>
    </location>
</feature>
<feature type="region of interest" description="Disordered" evidence="2">
    <location>
        <begin position="499"/>
        <end position="524"/>
    </location>
</feature>
<feature type="compositionally biased region" description="Polar residues" evidence="2">
    <location>
        <begin position="375"/>
        <end position="390"/>
    </location>
</feature>
<feature type="compositionally biased region" description="Polar residues" evidence="2">
    <location>
        <begin position="499"/>
        <end position="510"/>
    </location>
</feature>
<protein>
    <recommendedName>
        <fullName evidence="4">Protein SOSEKI 2</fullName>
        <shortName evidence="4">PpSOK2</shortName>
    </recommendedName>
</protein>